<sequence>MDIEERIKLVLKKPTEEVLTVENLRHLFEIGAPLQHYIGFEISGYIHLGTGLMAGAKIADFQKAGIKTRVFLADWHSWINDKLGGDLETIQEVALKYFKVGMEKSIEVMGGKPEKVEFVLASEILEKGDYWQTVIDISKNVTLSRVLRSITIMGRKMGEAIDFAKLIYPMMQVADIFYQGVTIAHAGMDQRKAHVIAIEVAEKLRYHPIIHNGEKLKPVAVHHHLLLGLQEPPKWPIESEEEFKEIKAEMKMSKSKPYSAVFIHDSPEEIREKLRKAFCPAREVKYNPVLDWVEYLVFREEPTEFTIHRPAKYGGDVTYTTFEELKRDFAEGKLHPLDLKNAVAEYLIDLLEPIRKYFERHPEPLELMKSVQITR</sequence>
<proteinExistence type="inferred from homology"/>
<comment type="function">
    <text evidence="1">Catalyzes the attachment of tyrosine to tRNA(Tyr) in a two-step reaction: tyrosine is first activated by ATP to form Tyr-AMP and then transferred to the acceptor end of tRNA(Tyr).</text>
</comment>
<comment type="catalytic activity">
    <reaction evidence="1">
        <text>tRNA(Tyr) + L-tyrosine + ATP = L-tyrosyl-tRNA(Tyr) + AMP + diphosphate + H(+)</text>
        <dbReference type="Rhea" id="RHEA:10220"/>
        <dbReference type="Rhea" id="RHEA-COMP:9706"/>
        <dbReference type="Rhea" id="RHEA-COMP:9707"/>
        <dbReference type="ChEBI" id="CHEBI:15378"/>
        <dbReference type="ChEBI" id="CHEBI:30616"/>
        <dbReference type="ChEBI" id="CHEBI:33019"/>
        <dbReference type="ChEBI" id="CHEBI:58315"/>
        <dbReference type="ChEBI" id="CHEBI:78442"/>
        <dbReference type="ChEBI" id="CHEBI:78536"/>
        <dbReference type="ChEBI" id="CHEBI:456215"/>
        <dbReference type="EC" id="6.1.1.1"/>
    </reaction>
</comment>
<comment type="subunit">
    <text evidence="1">Homodimer.</text>
</comment>
<comment type="subcellular location">
    <subcellularLocation>
        <location evidence="1">Cytoplasm</location>
    </subcellularLocation>
</comment>
<comment type="similarity">
    <text evidence="1">Belongs to the class-I aminoacyl-tRNA synthetase family. TyrS type 4 subfamily.</text>
</comment>
<keyword id="KW-0030">Aminoacyl-tRNA synthetase</keyword>
<keyword id="KW-0067">ATP-binding</keyword>
<keyword id="KW-0963">Cytoplasm</keyword>
<keyword id="KW-0436">Ligase</keyword>
<keyword id="KW-0547">Nucleotide-binding</keyword>
<keyword id="KW-0648">Protein biosynthesis</keyword>
<keyword id="KW-1185">Reference proteome</keyword>
<reference key="1">
    <citation type="journal article" date="1999" name="Genetics">
        <title>Divergence of the hyperthermophilic archaea Pyrococcus furiosus and P. horikoshii inferred from complete genomic sequences.</title>
        <authorList>
            <person name="Maeder D.L."/>
            <person name="Weiss R.B."/>
            <person name="Dunn D.M."/>
            <person name="Cherry J.L."/>
            <person name="Gonzalez J.M."/>
            <person name="DiRuggiero J."/>
            <person name="Robb F.T."/>
        </authorList>
    </citation>
    <scope>NUCLEOTIDE SEQUENCE [LARGE SCALE GENOMIC DNA]</scope>
    <source>
        <strain>ATCC 43587 / DSM 3638 / JCM 8422 / Vc1</strain>
    </source>
</reference>
<organism>
    <name type="scientific">Pyrococcus furiosus (strain ATCC 43587 / DSM 3638 / JCM 8422 / Vc1)</name>
    <dbReference type="NCBI Taxonomy" id="186497"/>
    <lineage>
        <taxon>Archaea</taxon>
        <taxon>Methanobacteriati</taxon>
        <taxon>Methanobacteriota</taxon>
        <taxon>Thermococci</taxon>
        <taxon>Thermococcales</taxon>
        <taxon>Thermococcaceae</taxon>
        <taxon>Pyrococcus</taxon>
    </lineage>
</organism>
<protein>
    <recommendedName>
        <fullName evidence="1">Tyrosine--tRNA ligase</fullName>
        <ecNumber evidence="1">6.1.1.1</ecNumber>
    </recommendedName>
    <alternativeName>
        <fullName evidence="1">Tyrosyl-tRNA synthetase</fullName>
        <shortName evidence="1">TyrRS</shortName>
    </alternativeName>
</protein>
<name>SYY_PYRFU</name>
<feature type="chain" id="PRO_0000240268" description="Tyrosine--tRNA ligase">
    <location>
        <begin position="1"/>
        <end position="375"/>
    </location>
</feature>
<feature type="short sequence motif" description="'KMSKS' region">
    <location>
        <begin position="251"/>
        <end position="255"/>
    </location>
</feature>
<feature type="binding site" evidence="1">
    <location>
        <position position="37"/>
    </location>
    <ligand>
        <name>L-tyrosine</name>
        <dbReference type="ChEBI" id="CHEBI:58315"/>
    </ligand>
</feature>
<feature type="binding site" evidence="1">
    <location>
        <position position="168"/>
    </location>
    <ligand>
        <name>L-tyrosine</name>
        <dbReference type="ChEBI" id="CHEBI:58315"/>
    </ligand>
</feature>
<feature type="binding site" evidence="1">
    <location>
        <position position="172"/>
    </location>
    <ligand>
        <name>L-tyrosine</name>
        <dbReference type="ChEBI" id="CHEBI:58315"/>
    </ligand>
</feature>
<feature type="binding site" evidence="1">
    <location>
        <position position="175"/>
    </location>
    <ligand>
        <name>L-tyrosine</name>
        <dbReference type="ChEBI" id="CHEBI:58315"/>
    </ligand>
</feature>
<feature type="binding site" evidence="1">
    <location>
        <position position="190"/>
    </location>
    <ligand>
        <name>L-tyrosine</name>
        <dbReference type="ChEBI" id="CHEBI:58315"/>
    </ligand>
</feature>
<feature type="binding site" evidence="1">
    <location>
        <position position="254"/>
    </location>
    <ligand>
        <name>ATP</name>
        <dbReference type="ChEBI" id="CHEBI:30616"/>
    </ligand>
</feature>
<accession>Q8U2H3</accession>
<evidence type="ECO:0000255" key="1">
    <source>
        <dbReference type="HAMAP-Rule" id="MF_02009"/>
    </source>
</evidence>
<dbReference type="EC" id="6.1.1.1" evidence="1"/>
<dbReference type="EMBL" id="AE009950">
    <property type="protein sequence ID" value="AAL80986.1"/>
    <property type="molecule type" value="Genomic_DNA"/>
</dbReference>
<dbReference type="RefSeq" id="WP_011011995.1">
    <property type="nucleotide sequence ID" value="NZ_CP023154.1"/>
</dbReference>
<dbReference type="SMR" id="Q8U2H3"/>
<dbReference type="STRING" id="186497.PF0862"/>
<dbReference type="PaxDb" id="186497-PF0862"/>
<dbReference type="KEGG" id="pfu:PF0862"/>
<dbReference type="PATRIC" id="fig|186497.12.peg.913"/>
<dbReference type="eggNOG" id="arCOG01886">
    <property type="taxonomic scope" value="Archaea"/>
</dbReference>
<dbReference type="HOGENOM" id="CLU_035267_1_1_2"/>
<dbReference type="OrthoDB" id="8389at2157"/>
<dbReference type="PhylomeDB" id="Q8U2H3"/>
<dbReference type="Proteomes" id="UP000001013">
    <property type="component" value="Chromosome"/>
</dbReference>
<dbReference type="GO" id="GO:0005737">
    <property type="term" value="C:cytoplasm"/>
    <property type="evidence" value="ECO:0007669"/>
    <property type="project" value="UniProtKB-SubCell"/>
</dbReference>
<dbReference type="GO" id="GO:0005524">
    <property type="term" value="F:ATP binding"/>
    <property type="evidence" value="ECO:0007669"/>
    <property type="project" value="UniProtKB-UniRule"/>
</dbReference>
<dbReference type="GO" id="GO:0004831">
    <property type="term" value="F:tyrosine-tRNA ligase activity"/>
    <property type="evidence" value="ECO:0007669"/>
    <property type="project" value="UniProtKB-UniRule"/>
</dbReference>
<dbReference type="GO" id="GO:0006437">
    <property type="term" value="P:tyrosyl-tRNA aminoacylation"/>
    <property type="evidence" value="ECO:0007669"/>
    <property type="project" value="UniProtKB-UniRule"/>
</dbReference>
<dbReference type="Gene3D" id="3.40.50.620">
    <property type="entry name" value="HUPs"/>
    <property type="match status" value="1"/>
</dbReference>
<dbReference type="Gene3D" id="1.10.240.10">
    <property type="entry name" value="Tyrosyl-Transfer RNA Synthetase"/>
    <property type="match status" value="1"/>
</dbReference>
<dbReference type="HAMAP" id="MF_02009">
    <property type="entry name" value="Tyr_tRNA_synth_type4"/>
    <property type="match status" value="1"/>
</dbReference>
<dbReference type="InterPro" id="IPR002305">
    <property type="entry name" value="aa-tRNA-synth_Ic"/>
</dbReference>
<dbReference type="InterPro" id="IPR014729">
    <property type="entry name" value="Rossmann-like_a/b/a_fold"/>
</dbReference>
<dbReference type="InterPro" id="IPR023678">
    <property type="entry name" value="Tyr-tRNA-ligase_4"/>
</dbReference>
<dbReference type="InterPro" id="IPR023617">
    <property type="entry name" value="Tyr-tRNA-ligase_arc/euk-type"/>
</dbReference>
<dbReference type="InterPro" id="IPR050489">
    <property type="entry name" value="Tyr-tRNA_synthase"/>
</dbReference>
<dbReference type="NCBIfam" id="NF006330">
    <property type="entry name" value="PRK08560.1"/>
    <property type="match status" value="1"/>
</dbReference>
<dbReference type="PANTHER" id="PTHR46264:SF4">
    <property type="entry name" value="TYROSINE--TRNA LIGASE, CYTOPLASMIC"/>
    <property type="match status" value="1"/>
</dbReference>
<dbReference type="PANTHER" id="PTHR46264">
    <property type="entry name" value="TYROSINE-TRNA LIGASE"/>
    <property type="match status" value="1"/>
</dbReference>
<dbReference type="Pfam" id="PF00579">
    <property type="entry name" value="tRNA-synt_1b"/>
    <property type="match status" value="1"/>
</dbReference>
<dbReference type="PIRSF" id="PIRSF006588">
    <property type="entry name" value="TyrRS_arch_euk"/>
    <property type="match status" value="1"/>
</dbReference>
<dbReference type="SUPFAM" id="SSF52374">
    <property type="entry name" value="Nucleotidylyl transferase"/>
    <property type="match status" value="1"/>
</dbReference>
<gene>
    <name evidence="1" type="primary">tyrS</name>
    <name type="ordered locus">PF0862</name>
</gene>